<keyword id="KW-0963">Cytoplasm</keyword>
<keyword id="KW-0285">Flavoprotein</keyword>
<keyword id="KW-0288">FMN</keyword>
<keyword id="KW-0520">NAD</keyword>
<keyword id="KW-0560">Oxidoreductase</keyword>
<keyword id="KW-0665">Pyrimidine biosynthesis</keyword>
<keyword id="KW-1185">Reference proteome</keyword>
<sequence>MNLSVKLPGLNLKNPIMPASGCFGFGKEYSEYYDLSLLGGVMMKAATQFERLGNPTPRVAETSAGMLNAIGLQNPGVQQIIDHEVPRLAKYDTSIIANIAGSSIEEYEFVAASFNQTTDVDALELNISCPNVKEGGIQFGTDPFMAKKVTEVVKKASNKPVYVKLSPNVHNIVEMAKAVEEAGADGLSMINTLTGMKIHLPSRKPLIANKTGGLSGPAIKPVAIRMIYEVRQQVSIPIIGMGGITSAEDVLEYLIAGADAVAVGTANFQNPFVCVDIINELPEVLEQYGFNSIEDVIEKRGITV</sequence>
<proteinExistence type="inferred from homology"/>
<dbReference type="EC" id="1.3.1.14"/>
<dbReference type="EMBL" id="BA000028">
    <property type="protein sequence ID" value="BAC13449.1"/>
    <property type="molecule type" value="Genomic_DNA"/>
</dbReference>
<dbReference type="RefSeq" id="WP_011065894.1">
    <property type="nucleotide sequence ID" value="NC_004193.1"/>
</dbReference>
<dbReference type="SMR" id="Q8CWG1"/>
<dbReference type="STRING" id="221109.gene:10733733"/>
<dbReference type="KEGG" id="oih:OB1493"/>
<dbReference type="eggNOG" id="COG0167">
    <property type="taxonomic scope" value="Bacteria"/>
</dbReference>
<dbReference type="HOGENOM" id="CLU_042042_0_0_9"/>
<dbReference type="OrthoDB" id="9794954at2"/>
<dbReference type="PhylomeDB" id="Q8CWG1"/>
<dbReference type="UniPathway" id="UPA00070">
    <property type="reaction ID" value="UER00945"/>
</dbReference>
<dbReference type="Proteomes" id="UP000000822">
    <property type="component" value="Chromosome"/>
</dbReference>
<dbReference type="GO" id="GO:0005737">
    <property type="term" value="C:cytoplasm"/>
    <property type="evidence" value="ECO:0007669"/>
    <property type="project" value="UniProtKB-SubCell"/>
</dbReference>
<dbReference type="GO" id="GO:0004589">
    <property type="term" value="F:dihydroorotate dehydrogenase (NAD+) activity"/>
    <property type="evidence" value="ECO:0007669"/>
    <property type="project" value="UniProtKB-EC"/>
</dbReference>
<dbReference type="GO" id="GO:0006207">
    <property type="term" value="P:'de novo' pyrimidine nucleobase biosynthetic process"/>
    <property type="evidence" value="ECO:0007669"/>
    <property type="project" value="InterPro"/>
</dbReference>
<dbReference type="GO" id="GO:0044205">
    <property type="term" value="P:'de novo' UMP biosynthetic process"/>
    <property type="evidence" value="ECO:0007669"/>
    <property type="project" value="UniProtKB-UniRule"/>
</dbReference>
<dbReference type="CDD" id="cd04740">
    <property type="entry name" value="DHOD_1B_like"/>
    <property type="match status" value="1"/>
</dbReference>
<dbReference type="FunFam" id="3.20.20.70:FF:000069">
    <property type="entry name" value="Dihydroorotate dehydrogenase"/>
    <property type="match status" value="1"/>
</dbReference>
<dbReference type="Gene3D" id="3.20.20.70">
    <property type="entry name" value="Aldolase class I"/>
    <property type="match status" value="1"/>
</dbReference>
<dbReference type="HAMAP" id="MF_00224">
    <property type="entry name" value="DHO_dh_type1"/>
    <property type="match status" value="1"/>
</dbReference>
<dbReference type="InterPro" id="IPR013785">
    <property type="entry name" value="Aldolase_TIM"/>
</dbReference>
<dbReference type="InterPro" id="IPR050074">
    <property type="entry name" value="DHO_dehydrogenase"/>
</dbReference>
<dbReference type="InterPro" id="IPR033888">
    <property type="entry name" value="DHOD_1B"/>
</dbReference>
<dbReference type="InterPro" id="IPR024920">
    <property type="entry name" value="Dihydroorotate_DH_1"/>
</dbReference>
<dbReference type="InterPro" id="IPR012135">
    <property type="entry name" value="Dihydroorotate_DH_1_2"/>
</dbReference>
<dbReference type="InterPro" id="IPR005720">
    <property type="entry name" value="Dihydroorotate_DH_cat"/>
</dbReference>
<dbReference type="InterPro" id="IPR001295">
    <property type="entry name" value="Dihydroorotate_DH_CS"/>
</dbReference>
<dbReference type="InterPro" id="IPR049622">
    <property type="entry name" value="Dihydroorotate_DH_I"/>
</dbReference>
<dbReference type="NCBIfam" id="NF005574">
    <property type="entry name" value="PRK07259.1"/>
    <property type="match status" value="1"/>
</dbReference>
<dbReference type="NCBIfam" id="TIGR01037">
    <property type="entry name" value="pyrD_sub1_fam"/>
    <property type="match status" value="1"/>
</dbReference>
<dbReference type="PANTHER" id="PTHR48109:SF1">
    <property type="entry name" value="DIHYDROOROTATE DEHYDROGENASE (FUMARATE)"/>
    <property type="match status" value="1"/>
</dbReference>
<dbReference type="PANTHER" id="PTHR48109">
    <property type="entry name" value="DIHYDROOROTATE DEHYDROGENASE (QUINONE), MITOCHONDRIAL-RELATED"/>
    <property type="match status" value="1"/>
</dbReference>
<dbReference type="Pfam" id="PF01180">
    <property type="entry name" value="DHO_dh"/>
    <property type="match status" value="1"/>
</dbReference>
<dbReference type="PIRSF" id="PIRSF000164">
    <property type="entry name" value="DHO_oxidase"/>
    <property type="match status" value="1"/>
</dbReference>
<dbReference type="SUPFAM" id="SSF51395">
    <property type="entry name" value="FMN-linked oxidoreductases"/>
    <property type="match status" value="1"/>
</dbReference>
<dbReference type="PROSITE" id="PS00911">
    <property type="entry name" value="DHODEHASE_1"/>
    <property type="match status" value="1"/>
</dbReference>
<dbReference type="PROSITE" id="PS00912">
    <property type="entry name" value="DHODEHASE_2"/>
    <property type="match status" value="1"/>
</dbReference>
<evidence type="ECO:0000250" key="1"/>
<evidence type="ECO:0000305" key="2"/>
<reference key="1">
    <citation type="journal article" date="2002" name="Nucleic Acids Res.">
        <title>Genome sequence of Oceanobacillus iheyensis isolated from the Iheya Ridge and its unexpected adaptive capabilities to extreme environments.</title>
        <authorList>
            <person name="Takami H."/>
            <person name="Takaki Y."/>
            <person name="Uchiyama I."/>
        </authorList>
    </citation>
    <scope>NUCLEOTIDE SEQUENCE [LARGE SCALE GENOMIC DNA]</scope>
    <source>
        <strain>DSM 14371 / CIP 107618 / JCM 11309 / KCTC 3954 / HTE831</strain>
    </source>
</reference>
<protein>
    <recommendedName>
        <fullName>Dihydroorotate dehydrogenase B (NAD(+)), catalytic subunit</fullName>
        <shortName>DHOD B</shortName>
        <shortName>DHODase B</shortName>
        <shortName>DHOdehase B</shortName>
        <ecNumber>1.3.1.14</ecNumber>
    </recommendedName>
    <alternativeName>
        <fullName>Dihydroorotate oxidase B</fullName>
    </alternativeName>
    <alternativeName>
        <fullName>Orotate reductase (NADH)</fullName>
    </alternativeName>
</protein>
<accession>Q8CWG1</accession>
<name>PYRDB_OCEIH</name>
<feature type="chain" id="PRO_0000148401" description="Dihydroorotate dehydrogenase B (NAD(+)), catalytic subunit">
    <location>
        <begin position="1"/>
        <end position="304"/>
    </location>
</feature>
<feature type="active site" description="Nucleophile">
    <location>
        <position position="129"/>
    </location>
</feature>
<feature type="binding site" evidence="1">
    <location>
        <position position="20"/>
    </location>
    <ligand>
        <name>FMN</name>
        <dbReference type="ChEBI" id="CHEBI:58210"/>
    </ligand>
</feature>
<feature type="binding site" evidence="1">
    <location>
        <begin position="44"/>
        <end position="45"/>
    </location>
    <ligand>
        <name>FMN</name>
        <dbReference type="ChEBI" id="CHEBI:58210"/>
    </ligand>
</feature>
<feature type="binding site" evidence="1">
    <location>
        <position position="44"/>
    </location>
    <ligand>
        <name>substrate</name>
    </ligand>
</feature>
<feature type="binding site" evidence="1">
    <location>
        <begin position="68"/>
        <end position="72"/>
    </location>
    <ligand>
        <name>substrate</name>
    </ligand>
</feature>
<feature type="binding site" evidence="1">
    <location>
        <position position="98"/>
    </location>
    <ligand>
        <name>FMN</name>
        <dbReference type="ChEBI" id="CHEBI:58210"/>
    </ligand>
</feature>
<feature type="binding site" evidence="1">
    <location>
        <position position="126"/>
    </location>
    <ligand>
        <name>FMN</name>
        <dbReference type="ChEBI" id="CHEBI:58210"/>
    </ligand>
</feature>
<feature type="binding site" evidence="1">
    <location>
        <position position="126"/>
    </location>
    <ligand>
        <name>substrate</name>
    </ligand>
</feature>
<feature type="binding site" evidence="1">
    <location>
        <position position="164"/>
    </location>
    <ligand>
        <name>FMN</name>
        <dbReference type="ChEBI" id="CHEBI:58210"/>
    </ligand>
</feature>
<feature type="binding site" evidence="1">
    <location>
        <position position="190"/>
    </location>
    <ligand>
        <name>FMN</name>
        <dbReference type="ChEBI" id="CHEBI:58210"/>
    </ligand>
</feature>
<feature type="binding site" evidence="1">
    <location>
        <begin position="191"/>
        <end position="192"/>
    </location>
    <ligand>
        <name>substrate</name>
    </ligand>
</feature>
<feature type="binding site" evidence="1">
    <location>
        <position position="216"/>
    </location>
    <ligand>
        <name>FMN</name>
        <dbReference type="ChEBI" id="CHEBI:58210"/>
    </ligand>
</feature>
<feature type="binding site" evidence="1">
    <location>
        <begin position="242"/>
        <end position="243"/>
    </location>
    <ligand>
        <name>FMN</name>
        <dbReference type="ChEBI" id="CHEBI:58210"/>
    </ligand>
</feature>
<feature type="binding site" evidence="1">
    <location>
        <begin position="264"/>
        <end position="265"/>
    </location>
    <ligand>
        <name>FMN</name>
        <dbReference type="ChEBI" id="CHEBI:58210"/>
    </ligand>
</feature>
<gene>
    <name type="primary">pyrD</name>
    <name type="ordered locus">OB1493</name>
</gene>
<comment type="function">
    <text evidence="1">Catalyzes the conversion of dihydroorotate to orotate with NAD(+) as electron acceptor.</text>
</comment>
<comment type="catalytic activity">
    <reaction>
        <text>(S)-dihydroorotate + NAD(+) = orotate + NADH + H(+)</text>
        <dbReference type="Rhea" id="RHEA:13513"/>
        <dbReference type="ChEBI" id="CHEBI:15378"/>
        <dbReference type="ChEBI" id="CHEBI:30839"/>
        <dbReference type="ChEBI" id="CHEBI:30864"/>
        <dbReference type="ChEBI" id="CHEBI:57540"/>
        <dbReference type="ChEBI" id="CHEBI:57945"/>
        <dbReference type="EC" id="1.3.1.14"/>
    </reaction>
</comment>
<comment type="cofactor">
    <cofactor evidence="1">
        <name>FMN</name>
        <dbReference type="ChEBI" id="CHEBI:58210"/>
    </cofactor>
    <text evidence="1">Binds 1 FMN per subunit.</text>
</comment>
<comment type="pathway">
    <text>Pyrimidine metabolism; UMP biosynthesis via de novo pathway; orotate from (S)-dihydroorotate (NAD(+) route): step 1/1.</text>
</comment>
<comment type="subunit">
    <text evidence="1">Heterotetramer of 2 PyrK and 2 PyrD type B subunits.</text>
</comment>
<comment type="subcellular location">
    <subcellularLocation>
        <location evidence="1">Cytoplasm</location>
    </subcellularLocation>
</comment>
<comment type="similarity">
    <text evidence="2">Belongs to the dihydroorotate dehydrogenase family. Type 1 subfamily.</text>
</comment>
<organism>
    <name type="scientific">Oceanobacillus iheyensis (strain DSM 14371 / CIP 107618 / JCM 11309 / KCTC 3954 / HTE831)</name>
    <dbReference type="NCBI Taxonomy" id="221109"/>
    <lineage>
        <taxon>Bacteria</taxon>
        <taxon>Bacillati</taxon>
        <taxon>Bacillota</taxon>
        <taxon>Bacilli</taxon>
        <taxon>Bacillales</taxon>
        <taxon>Bacillaceae</taxon>
        <taxon>Oceanobacillus</taxon>
    </lineage>
</organism>